<sequence length="458" mass="51225">MKPVVVILGRPNVGKSTLFNRLTRTQNALVDDMPGVTRDRLYGDVEWNGVFFSLVDTGGFLSGDDDFFMPHIQSQIHRAIDEADAVLLVFDGKSGISPFDREAMAFLQSASCPVFYLVNKIDSPEREVYTAEFFGLGLDNLYPVSGAHGYGVTDFLDDLVNALPETEPEPPADDMIKLAVVGRPNVGKSTLINRILGQERMIVSDVPGTTRESVDTVCEIDGRSYLLIDTAGLRRKSRVSVKLEKFSAIKTLKSLDRCDIALILVDAEEGVTDQDVTIAGYAFERGCGCIFLVNKWDLAKEQEKKAKTFYDDLQDQAKFLSFAPAVTISAATGFRVKKIFELIDAVHAQYTFNIKTGELNNIFERATRSKEPPFHKGRRLKFNYAVQVATGPPTFICFVNFPSGVHFSYKRYLINAIRRETGLDKTPIRLFFREKPGRIDFAALKPSEKRGGKKTRRK</sequence>
<reference key="1">
    <citation type="submission" date="2007-10" db="EMBL/GenBank/DDBJ databases">
        <title>Complete sequence of Desulfococcus oleovorans Hxd3.</title>
        <authorList>
            <consortium name="US DOE Joint Genome Institute"/>
            <person name="Copeland A."/>
            <person name="Lucas S."/>
            <person name="Lapidus A."/>
            <person name="Barry K."/>
            <person name="Glavina del Rio T."/>
            <person name="Dalin E."/>
            <person name="Tice H."/>
            <person name="Pitluck S."/>
            <person name="Kiss H."/>
            <person name="Brettin T."/>
            <person name="Bruce D."/>
            <person name="Detter J.C."/>
            <person name="Han C."/>
            <person name="Schmutz J."/>
            <person name="Larimer F."/>
            <person name="Land M."/>
            <person name="Hauser L."/>
            <person name="Kyrpides N."/>
            <person name="Kim E."/>
            <person name="Wawrik B."/>
            <person name="Richardson P."/>
        </authorList>
    </citation>
    <scope>NUCLEOTIDE SEQUENCE [LARGE SCALE GENOMIC DNA]</scope>
    <source>
        <strain>DSM 6200 / JCM 39069 / Hxd3</strain>
    </source>
</reference>
<evidence type="ECO:0000255" key="1">
    <source>
        <dbReference type="HAMAP-Rule" id="MF_00195"/>
    </source>
</evidence>
<feature type="chain" id="PRO_1000118642" description="GTPase Der">
    <location>
        <begin position="1"/>
        <end position="458"/>
    </location>
</feature>
<feature type="domain" description="EngA-type G 1">
    <location>
        <begin position="3"/>
        <end position="167"/>
    </location>
</feature>
<feature type="domain" description="EngA-type G 2">
    <location>
        <begin position="176"/>
        <end position="351"/>
    </location>
</feature>
<feature type="domain" description="KH-like" evidence="1">
    <location>
        <begin position="352"/>
        <end position="436"/>
    </location>
</feature>
<feature type="binding site" evidence="1">
    <location>
        <begin position="9"/>
        <end position="16"/>
    </location>
    <ligand>
        <name>GTP</name>
        <dbReference type="ChEBI" id="CHEBI:37565"/>
        <label>1</label>
    </ligand>
</feature>
<feature type="binding site" evidence="1">
    <location>
        <begin position="56"/>
        <end position="60"/>
    </location>
    <ligand>
        <name>GTP</name>
        <dbReference type="ChEBI" id="CHEBI:37565"/>
        <label>1</label>
    </ligand>
</feature>
<feature type="binding site" evidence="1">
    <location>
        <begin position="119"/>
        <end position="122"/>
    </location>
    <ligand>
        <name>GTP</name>
        <dbReference type="ChEBI" id="CHEBI:37565"/>
        <label>1</label>
    </ligand>
</feature>
<feature type="binding site" evidence="1">
    <location>
        <begin position="182"/>
        <end position="189"/>
    </location>
    <ligand>
        <name>GTP</name>
        <dbReference type="ChEBI" id="CHEBI:37565"/>
        <label>2</label>
    </ligand>
</feature>
<feature type="binding site" evidence="1">
    <location>
        <begin position="229"/>
        <end position="233"/>
    </location>
    <ligand>
        <name>GTP</name>
        <dbReference type="ChEBI" id="CHEBI:37565"/>
        <label>2</label>
    </ligand>
</feature>
<feature type="binding site" evidence="1">
    <location>
        <begin position="294"/>
        <end position="297"/>
    </location>
    <ligand>
        <name>GTP</name>
        <dbReference type="ChEBI" id="CHEBI:37565"/>
        <label>2</label>
    </ligand>
</feature>
<gene>
    <name evidence="1" type="primary">der</name>
    <name type="synonym">engA</name>
    <name type="ordered locus">Dole_2134</name>
</gene>
<name>DER_DESOH</name>
<protein>
    <recommendedName>
        <fullName evidence="1">GTPase Der</fullName>
    </recommendedName>
    <alternativeName>
        <fullName evidence="1">GTP-binding protein EngA</fullName>
    </alternativeName>
</protein>
<keyword id="KW-0342">GTP-binding</keyword>
<keyword id="KW-0547">Nucleotide-binding</keyword>
<keyword id="KW-1185">Reference proteome</keyword>
<keyword id="KW-0677">Repeat</keyword>
<keyword id="KW-0690">Ribosome biogenesis</keyword>
<comment type="function">
    <text evidence="1">GTPase that plays an essential role in the late steps of ribosome biogenesis.</text>
</comment>
<comment type="subunit">
    <text evidence="1">Associates with the 50S ribosomal subunit.</text>
</comment>
<comment type="similarity">
    <text evidence="1">Belongs to the TRAFAC class TrmE-Era-EngA-EngB-Septin-like GTPase superfamily. EngA (Der) GTPase family.</text>
</comment>
<accession>A8ZU05</accession>
<proteinExistence type="inferred from homology"/>
<organism>
    <name type="scientific">Desulfosudis oleivorans (strain DSM 6200 / JCM 39069 / Hxd3)</name>
    <name type="common">Desulfococcus oleovorans</name>
    <dbReference type="NCBI Taxonomy" id="96561"/>
    <lineage>
        <taxon>Bacteria</taxon>
        <taxon>Pseudomonadati</taxon>
        <taxon>Thermodesulfobacteriota</taxon>
        <taxon>Desulfobacteria</taxon>
        <taxon>Desulfobacterales</taxon>
        <taxon>Desulfosudaceae</taxon>
        <taxon>Desulfosudis</taxon>
    </lineage>
</organism>
<dbReference type="EMBL" id="CP000859">
    <property type="protein sequence ID" value="ABW67938.1"/>
    <property type="molecule type" value="Genomic_DNA"/>
</dbReference>
<dbReference type="RefSeq" id="WP_012175550.1">
    <property type="nucleotide sequence ID" value="NC_009943.1"/>
</dbReference>
<dbReference type="SMR" id="A8ZU05"/>
<dbReference type="STRING" id="96561.Dole_2134"/>
<dbReference type="KEGG" id="dol:Dole_2134"/>
<dbReference type="eggNOG" id="COG1160">
    <property type="taxonomic scope" value="Bacteria"/>
</dbReference>
<dbReference type="HOGENOM" id="CLU_016077_6_2_7"/>
<dbReference type="OrthoDB" id="9805918at2"/>
<dbReference type="Proteomes" id="UP000008561">
    <property type="component" value="Chromosome"/>
</dbReference>
<dbReference type="GO" id="GO:0005525">
    <property type="term" value="F:GTP binding"/>
    <property type="evidence" value="ECO:0007669"/>
    <property type="project" value="UniProtKB-UniRule"/>
</dbReference>
<dbReference type="GO" id="GO:0043022">
    <property type="term" value="F:ribosome binding"/>
    <property type="evidence" value="ECO:0007669"/>
    <property type="project" value="TreeGrafter"/>
</dbReference>
<dbReference type="GO" id="GO:0042254">
    <property type="term" value="P:ribosome biogenesis"/>
    <property type="evidence" value="ECO:0007669"/>
    <property type="project" value="UniProtKB-KW"/>
</dbReference>
<dbReference type="CDD" id="cd01894">
    <property type="entry name" value="EngA1"/>
    <property type="match status" value="1"/>
</dbReference>
<dbReference type="CDD" id="cd01895">
    <property type="entry name" value="EngA2"/>
    <property type="match status" value="1"/>
</dbReference>
<dbReference type="FunFam" id="3.30.300.20:FF:000004">
    <property type="entry name" value="GTPase Der"/>
    <property type="match status" value="1"/>
</dbReference>
<dbReference type="FunFam" id="3.40.50.300:FF:000040">
    <property type="entry name" value="GTPase Der"/>
    <property type="match status" value="1"/>
</dbReference>
<dbReference type="FunFam" id="3.40.50.300:FF:000057">
    <property type="entry name" value="GTPase Der"/>
    <property type="match status" value="1"/>
</dbReference>
<dbReference type="Gene3D" id="3.30.300.20">
    <property type="match status" value="1"/>
</dbReference>
<dbReference type="Gene3D" id="3.40.50.300">
    <property type="entry name" value="P-loop containing nucleotide triphosphate hydrolases"/>
    <property type="match status" value="2"/>
</dbReference>
<dbReference type="HAMAP" id="MF_00195">
    <property type="entry name" value="GTPase_Der"/>
    <property type="match status" value="1"/>
</dbReference>
<dbReference type="InterPro" id="IPR031166">
    <property type="entry name" value="G_ENGA"/>
</dbReference>
<dbReference type="InterPro" id="IPR006073">
    <property type="entry name" value="GTP-bd"/>
</dbReference>
<dbReference type="InterPro" id="IPR016484">
    <property type="entry name" value="GTPase_Der"/>
</dbReference>
<dbReference type="InterPro" id="IPR032859">
    <property type="entry name" value="KH_dom-like"/>
</dbReference>
<dbReference type="InterPro" id="IPR015946">
    <property type="entry name" value="KH_dom-like_a/b"/>
</dbReference>
<dbReference type="InterPro" id="IPR027417">
    <property type="entry name" value="P-loop_NTPase"/>
</dbReference>
<dbReference type="InterPro" id="IPR005225">
    <property type="entry name" value="Small_GTP-bd"/>
</dbReference>
<dbReference type="NCBIfam" id="TIGR03594">
    <property type="entry name" value="GTPase_EngA"/>
    <property type="match status" value="1"/>
</dbReference>
<dbReference type="NCBIfam" id="TIGR00231">
    <property type="entry name" value="small_GTP"/>
    <property type="match status" value="2"/>
</dbReference>
<dbReference type="PANTHER" id="PTHR43834">
    <property type="entry name" value="GTPASE DER"/>
    <property type="match status" value="1"/>
</dbReference>
<dbReference type="PANTHER" id="PTHR43834:SF6">
    <property type="entry name" value="GTPASE DER"/>
    <property type="match status" value="1"/>
</dbReference>
<dbReference type="Pfam" id="PF14714">
    <property type="entry name" value="KH_dom-like"/>
    <property type="match status" value="1"/>
</dbReference>
<dbReference type="Pfam" id="PF01926">
    <property type="entry name" value="MMR_HSR1"/>
    <property type="match status" value="2"/>
</dbReference>
<dbReference type="PIRSF" id="PIRSF006485">
    <property type="entry name" value="GTP-binding_EngA"/>
    <property type="match status" value="1"/>
</dbReference>
<dbReference type="PRINTS" id="PR00326">
    <property type="entry name" value="GTP1OBG"/>
</dbReference>
<dbReference type="SUPFAM" id="SSF52540">
    <property type="entry name" value="P-loop containing nucleoside triphosphate hydrolases"/>
    <property type="match status" value="2"/>
</dbReference>
<dbReference type="PROSITE" id="PS51712">
    <property type="entry name" value="G_ENGA"/>
    <property type="match status" value="2"/>
</dbReference>